<keyword id="KW-0238">DNA-binding</keyword>
<keyword id="KW-1048">Host nucleus</keyword>
<keyword id="KW-0378">Hydrolase</keyword>
<keyword id="KW-1185">Reference proteome</keyword>
<keyword id="KW-0231">Viral genome packaging</keyword>
<keyword id="KW-1188">Viral release from host cell</keyword>
<dbReference type="EC" id="3.1.-.-" evidence="1"/>
<dbReference type="EMBL" id="DQ279927">
    <property type="protein sequence ID" value="ABB89264.1"/>
    <property type="molecule type" value="Genomic_DNA"/>
</dbReference>
<dbReference type="RefSeq" id="YP_001129485.1">
    <property type="nucleotide sequence ID" value="NC_009334.1"/>
</dbReference>
<dbReference type="RefSeq" id="YP_401690.1">
    <property type="nucleotide sequence ID" value="NC_007605.1"/>
</dbReference>
<dbReference type="SMR" id="P0C744"/>
<dbReference type="DNASU" id="3783767"/>
<dbReference type="GeneID" id="3783767"/>
<dbReference type="KEGG" id="vg:3783767"/>
<dbReference type="KEGG" id="vg:5176176"/>
<dbReference type="Proteomes" id="UP000007639">
    <property type="component" value="Genome"/>
</dbReference>
<dbReference type="GO" id="GO:0042025">
    <property type="term" value="C:host cell nucleus"/>
    <property type="evidence" value="ECO:0007669"/>
    <property type="project" value="UniProtKB-SubCell"/>
</dbReference>
<dbReference type="GO" id="GO:0003677">
    <property type="term" value="F:DNA binding"/>
    <property type="evidence" value="ECO:0007669"/>
    <property type="project" value="UniProtKB-KW"/>
</dbReference>
<dbReference type="GO" id="GO:0016787">
    <property type="term" value="F:hydrolase activity"/>
    <property type="evidence" value="ECO:0007669"/>
    <property type="project" value="UniProtKB-KW"/>
</dbReference>
<dbReference type="GO" id="GO:0051276">
    <property type="term" value="P:chromosome organization"/>
    <property type="evidence" value="ECO:0007669"/>
    <property type="project" value="InterPro"/>
</dbReference>
<dbReference type="Gene3D" id="3.30.420.320">
    <property type="match status" value="1"/>
</dbReference>
<dbReference type="Gene3D" id="3.40.50.300">
    <property type="entry name" value="P-loop containing nucleotide triphosphate hydrolases"/>
    <property type="match status" value="1"/>
</dbReference>
<dbReference type="HAMAP" id="MF_04013">
    <property type="entry name" value="HSV_TRM3"/>
    <property type="match status" value="1"/>
</dbReference>
<dbReference type="InterPro" id="IPR003498">
    <property type="entry name" value="DNA_pack_C"/>
</dbReference>
<dbReference type="InterPro" id="IPR038435">
    <property type="entry name" value="DNA_pack_C_sf"/>
</dbReference>
<dbReference type="InterPro" id="IPR003499">
    <property type="entry name" value="DNA_pack_N"/>
</dbReference>
<dbReference type="InterPro" id="IPR033663">
    <property type="entry name" value="HSV_TRM3"/>
</dbReference>
<dbReference type="InterPro" id="IPR027417">
    <property type="entry name" value="P-loop_NTPase"/>
</dbReference>
<dbReference type="Pfam" id="PF02499">
    <property type="entry name" value="DNA_pack_C"/>
    <property type="match status" value="1"/>
</dbReference>
<dbReference type="Pfam" id="PF02500">
    <property type="entry name" value="DNA_pack_N"/>
    <property type="match status" value="1"/>
</dbReference>
<organismHost>
    <name type="scientific">Homo sapiens</name>
    <name type="common">Human</name>
    <dbReference type="NCBI Taxonomy" id="9606"/>
</organismHost>
<name>TRM3_EBVA8</name>
<accession>P0C744</accession>
<accession>Q777C9</accession>
<reference key="1">
    <citation type="journal article" date="2006" name="Virology">
        <title>The genome of Epstein-Barr virus type 2 strain AG876.</title>
        <authorList>
            <person name="Dolan A."/>
            <person name="Addison C."/>
            <person name="Gatherer D."/>
            <person name="Davison A.J."/>
            <person name="McGeoch D.J."/>
        </authorList>
    </citation>
    <scope>NUCLEOTIDE SEQUENCE [LARGE SCALE GENOMIC DNA]</scope>
</reference>
<protein>
    <recommendedName>
        <fullName evidence="1">Tripartite terminase subunit 3</fullName>
        <ecNumber evidence="1">3.1.-.-</ecNumber>
    </recommendedName>
    <alternativeName>
        <fullName evidence="1">Terminase large subunit</fullName>
    </alternativeName>
</protein>
<gene>
    <name evidence="1" type="primary">TRM3</name>
    <name type="ORF">BGRF1/BDRF1</name>
</gene>
<organism>
    <name type="scientific">Epstein-Barr virus (strain AG876)</name>
    <name type="common">HHV-4</name>
    <name type="synonym">Human herpesvirus 4</name>
    <dbReference type="NCBI Taxonomy" id="82830"/>
    <lineage>
        <taxon>Viruses</taxon>
        <taxon>Duplodnaviria</taxon>
        <taxon>Heunggongvirae</taxon>
        <taxon>Peploviricota</taxon>
        <taxon>Herviviricetes</taxon>
        <taxon>Herpesvirales</taxon>
        <taxon>Orthoherpesviridae</taxon>
        <taxon>Gammaherpesvirinae</taxon>
        <taxon>Lymphocryptovirus</taxon>
        <taxon>Lymphocryptovirus humangamma4</taxon>
        <taxon>Epstein-Barr virus (strain GD1)</taxon>
    </lineage>
</organism>
<comment type="function">
    <text evidence="1">Component of the molecular motor that translocates viral genomic DNA in empty capsid during DNA packaging. Forms a tripartite terminase complex together with TRM1 and TRM2 in the host cytoplasm. Once the complex reaches the host nucleus, it interacts with the capsid portal vertex. This portal forms a ring in which genomic DNA is translocated into the capsid. TRM3 carries an RNase H-like nuclease activity that plays an important role for the cleavage of concatemeric viral DNA into unit length genomes.</text>
</comment>
<comment type="subunit">
    <text evidence="1">Interacts with the terminase subunits TRM1 and TRM2. Interacts with portal protein.</text>
</comment>
<comment type="subcellular location">
    <subcellularLocation>
        <location evidence="1">Host nucleus</location>
    </subcellularLocation>
    <text evidence="1">Responsible for the nuclear localization of the two others subunits TRM1 and TRM2.</text>
</comment>
<comment type="similarity">
    <text evidence="1">Belongs to the herpesviridae TRM3 protein family.</text>
</comment>
<comment type="caution">
    <text evidence="2">Be careful of the possible confusion between BDRF1 with BdRF1.</text>
</comment>
<evidence type="ECO:0000255" key="1">
    <source>
        <dbReference type="HAMAP-Rule" id="MF_04013"/>
    </source>
</evidence>
<evidence type="ECO:0000305" key="2"/>
<sequence>MLYASQRGRLTENLRNALQQDSTTQGCLGAETPSIMYTGAKSDRWAHPLVGTIHASNLYCPMLRAYCRHYGPRPVFVASDESLPMFGASPALHTPVQVQMCLLPELRDTLQRLLPPPNLEDSEALTEFKTSVSSARAILEDPNFLEMREFVTSLASFLSGQYKHKPARLEAFQKQVVLHSFYFLISIKSLEITDTMFDIFQSAFGLEEMTLEKLHIFKQKASVFLIPRRHGKTWIVVAIISLILSNLSNVQIGYVAHQKHVASAVFTEIIDTLTKSFDSKRVEVNKETSTITFRHSGKISSTVMCATCFNKNSIRGQTFHLLFVDEANFIKKEALPAILGFMLQKDAKIIFISSVNSADQATSFLYKLKDAQERLLNVVSYVCQEHRQDFDMQDSMVSCPCFRLHIPSYITMDSNIRATTNLFLDGAFSTELMGDTSSLSQGSLSRTVRDDAINQLELCRVDTLNPRVAGRLASSLYVYVDPAYTNNTSASGTGIAAVTHDRADPNRVIVLGLEHFFLKDLTGDAALQIATCVVALVSSIVTLHPHLEEVKVAVEGNSSQDSAVAIASIIGESCPLPCAFVHTKDKTSSLQWPMYLLTNEKSKAFERLIYAVNTASLSASQVTVSNTIQLSFDPVLYLISQIRAIKPIPLRDGTYTYTGKQRNLSDDVLVALVMAHFLATTQKHTFKKVH</sequence>
<proteinExistence type="inferred from homology"/>
<feature type="chain" id="PRO_5000068829" description="Tripartite terminase subunit 3">
    <location>
        <begin position="1"/>
        <end position="690"/>
    </location>
</feature>
<feature type="short sequence motif" description="Walker A motif" evidence="1">
    <location>
        <begin position="226"/>
        <end position="233"/>
    </location>
</feature>
<feature type="short sequence motif" description="Walker B motif" evidence="1">
    <location>
        <begin position="321"/>
        <end position="326"/>
    </location>
</feature>
<feature type="active site" description="For ATPase activity" evidence="1">
    <location>
        <position position="326"/>
    </location>
</feature>
<feature type="active site" description="For nuclease activity" evidence="1">
    <location>
        <position position="481"/>
    </location>
</feature>
<feature type="active site" description="For nuclease activity" evidence="1">
    <location>
        <position position="555"/>
    </location>
</feature>
<feature type="active site" description="For nuclease activity" evidence="1">
    <location>
        <position position="667"/>
    </location>
</feature>